<protein>
    <recommendedName>
        <fullName evidence="1">Succinate--CoA ligase [ADP-forming] subunit beta</fullName>
        <ecNumber evidence="1">6.2.1.5</ecNumber>
    </recommendedName>
    <alternativeName>
        <fullName evidence="1">Succinyl-CoA synthetase subunit beta</fullName>
        <shortName evidence="1">SCS-beta</shortName>
    </alternativeName>
</protein>
<organism>
    <name type="scientific">Staphylococcus aureus (strain MRSA252)</name>
    <dbReference type="NCBI Taxonomy" id="282458"/>
    <lineage>
        <taxon>Bacteria</taxon>
        <taxon>Bacillati</taxon>
        <taxon>Bacillota</taxon>
        <taxon>Bacilli</taxon>
        <taxon>Bacillales</taxon>
        <taxon>Staphylococcaceae</taxon>
        <taxon>Staphylococcus</taxon>
    </lineage>
</organism>
<proteinExistence type="inferred from homology"/>
<sequence length="388" mass="42086">MNIHEYQGKEIFRSMGVAVPEGRVAFTAEEAVEKAKELNSDVYVVKAQIHAGGRGKAGGVKITKSLSEVETYAKELLGKTLVTHQTGPEGKEIKRLYIEEGCAIQKEYYVGFVIDRATDQVTLMASEEGGTEIEEVAAKTPEKIFKETIDPVIGLSPFQARRIAFNINIPKESVNKAAKFLLALYNVFIEKDCSIVEINPLVTTADGDVLALDAKINFDDNALFRHKDVVELRDLEEEDPKEIEASKHDLSYIALDGDIGCMVNGAGLAMATMDTINHFGGNPANFLDAGGSATREKVTEAFKIILGDENVKGIFVNIFGGIMKCDVIAEGIVEAVKEVDLTLPLVVRLEGTNVELGKKILKDSGLAIEPAATMAEGAQKIVKLVKEA</sequence>
<evidence type="ECO:0000255" key="1">
    <source>
        <dbReference type="HAMAP-Rule" id="MF_00558"/>
    </source>
</evidence>
<reference key="1">
    <citation type="journal article" date="2004" name="Proc. Natl. Acad. Sci. U.S.A.">
        <title>Complete genomes of two clinical Staphylococcus aureus strains: evidence for the rapid evolution of virulence and drug resistance.</title>
        <authorList>
            <person name="Holden M.T.G."/>
            <person name="Feil E.J."/>
            <person name="Lindsay J.A."/>
            <person name="Peacock S.J."/>
            <person name="Day N.P.J."/>
            <person name="Enright M.C."/>
            <person name="Foster T.J."/>
            <person name="Moore C.E."/>
            <person name="Hurst L."/>
            <person name="Atkin R."/>
            <person name="Barron A."/>
            <person name="Bason N."/>
            <person name="Bentley S.D."/>
            <person name="Chillingworth C."/>
            <person name="Chillingworth T."/>
            <person name="Churcher C."/>
            <person name="Clark L."/>
            <person name="Corton C."/>
            <person name="Cronin A."/>
            <person name="Doggett J."/>
            <person name="Dowd L."/>
            <person name="Feltwell T."/>
            <person name="Hance Z."/>
            <person name="Harris B."/>
            <person name="Hauser H."/>
            <person name="Holroyd S."/>
            <person name="Jagels K."/>
            <person name="James K.D."/>
            <person name="Lennard N."/>
            <person name="Line A."/>
            <person name="Mayes R."/>
            <person name="Moule S."/>
            <person name="Mungall K."/>
            <person name="Ormond D."/>
            <person name="Quail M.A."/>
            <person name="Rabbinowitsch E."/>
            <person name="Rutherford K.M."/>
            <person name="Sanders M."/>
            <person name="Sharp S."/>
            <person name="Simmonds M."/>
            <person name="Stevens K."/>
            <person name="Whitehead S."/>
            <person name="Barrell B.G."/>
            <person name="Spratt B.G."/>
            <person name="Parkhill J."/>
        </authorList>
    </citation>
    <scope>NUCLEOTIDE SEQUENCE [LARGE SCALE GENOMIC DNA]</scope>
    <source>
        <strain>MRSA252</strain>
    </source>
</reference>
<feature type="chain" id="PRO_0000102862" description="Succinate--CoA ligase [ADP-forming] subunit beta">
    <location>
        <begin position="1"/>
        <end position="388"/>
    </location>
</feature>
<feature type="domain" description="ATP-grasp" evidence="1">
    <location>
        <begin position="9"/>
        <end position="244"/>
    </location>
</feature>
<feature type="binding site" evidence="1">
    <location>
        <position position="46"/>
    </location>
    <ligand>
        <name>ATP</name>
        <dbReference type="ChEBI" id="CHEBI:30616"/>
    </ligand>
</feature>
<feature type="binding site" evidence="1">
    <location>
        <begin position="53"/>
        <end position="55"/>
    </location>
    <ligand>
        <name>ATP</name>
        <dbReference type="ChEBI" id="CHEBI:30616"/>
    </ligand>
</feature>
<feature type="binding site" evidence="1">
    <location>
        <position position="99"/>
    </location>
    <ligand>
        <name>ATP</name>
        <dbReference type="ChEBI" id="CHEBI:30616"/>
    </ligand>
</feature>
<feature type="binding site" evidence="1">
    <location>
        <position position="102"/>
    </location>
    <ligand>
        <name>ATP</name>
        <dbReference type="ChEBI" id="CHEBI:30616"/>
    </ligand>
</feature>
<feature type="binding site" evidence="1">
    <location>
        <position position="107"/>
    </location>
    <ligand>
        <name>ATP</name>
        <dbReference type="ChEBI" id="CHEBI:30616"/>
    </ligand>
</feature>
<feature type="binding site" evidence="1">
    <location>
        <position position="199"/>
    </location>
    <ligand>
        <name>Mg(2+)</name>
        <dbReference type="ChEBI" id="CHEBI:18420"/>
    </ligand>
</feature>
<feature type="binding site" evidence="1">
    <location>
        <position position="213"/>
    </location>
    <ligand>
        <name>Mg(2+)</name>
        <dbReference type="ChEBI" id="CHEBI:18420"/>
    </ligand>
</feature>
<feature type="binding site" evidence="1">
    <location>
        <position position="264"/>
    </location>
    <ligand>
        <name>substrate</name>
        <note>ligand shared with subunit alpha</note>
    </ligand>
</feature>
<feature type="binding site" evidence="1">
    <location>
        <begin position="321"/>
        <end position="323"/>
    </location>
    <ligand>
        <name>substrate</name>
        <note>ligand shared with subunit alpha</note>
    </ligand>
</feature>
<gene>
    <name evidence="1" type="primary">sucC</name>
    <name type="ordered locus">SAR1221</name>
</gene>
<accession>Q6GHJ0</accession>
<comment type="function">
    <text evidence="1">Succinyl-CoA synthetase functions in the citric acid cycle (TCA), coupling the hydrolysis of succinyl-CoA to the synthesis of either ATP or GTP and thus represents the only step of substrate-level phosphorylation in the TCA. The beta subunit provides nucleotide specificity of the enzyme and binds the substrate succinate, while the binding sites for coenzyme A and phosphate are found in the alpha subunit.</text>
</comment>
<comment type="catalytic activity">
    <reaction evidence="1">
        <text>succinate + ATP + CoA = succinyl-CoA + ADP + phosphate</text>
        <dbReference type="Rhea" id="RHEA:17661"/>
        <dbReference type="ChEBI" id="CHEBI:30031"/>
        <dbReference type="ChEBI" id="CHEBI:30616"/>
        <dbReference type="ChEBI" id="CHEBI:43474"/>
        <dbReference type="ChEBI" id="CHEBI:57287"/>
        <dbReference type="ChEBI" id="CHEBI:57292"/>
        <dbReference type="ChEBI" id="CHEBI:456216"/>
        <dbReference type="EC" id="6.2.1.5"/>
    </reaction>
    <physiologicalReaction direction="right-to-left" evidence="1">
        <dbReference type="Rhea" id="RHEA:17663"/>
    </physiologicalReaction>
</comment>
<comment type="catalytic activity">
    <reaction evidence="1">
        <text>GTP + succinate + CoA = succinyl-CoA + GDP + phosphate</text>
        <dbReference type="Rhea" id="RHEA:22120"/>
        <dbReference type="ChEBI" id="CHEBI:30031"/>
        <dbReference type="ChEBI" id="CHEBI:37565"/>
        <dbReference type="ChEBI" id="CHEBI:43474"/>
        <dbReference type="ChEBI" id="CHEBI:57287"/>
        <dbReference type="ChEBI" id="CHEBI:57292"/>
        <dbReference type="ChEBI" id="CHEBI:58189"/>
    </reaction>
    <physiologicalReaction direction="right-to-left" evidence="1">
        <dbReference type="Rhea" id="RHEA:22122"/>
    </physiologicalReaction>
</comment>
<comment type="cofactor">
    <cofactor evidence="1">
        <name>Mg(2+)</name>
        <dbReference type="ChEBI" id="CHEBI:18420"/>
    </cofactor>
    <text evidence="1">Binds 1 Mg(2+) ion per subunit.</text>
</comment>
<comment type="pathway">
    <text evidence="1">Carbohydrate metabolism; tricarboxylic acid cycle; succinate from succinyl-CoA (ligase route): step 1/1.</text>
</comment>
<comment type="subunit">
    <text evidence="1">Heterotetramer of two alpha and two beta subunits.</text>
</comment>
<comment type="similarity">
    <text evidence="1">Belongs to the succinate/malate CoA ligase beta subunit family.</text>
</comment>
<dbReference type="EC" id="6.2.1.5" evidence="1"/>
<dbReference type="EMBL" id="BX571856">
    <property type="protein sequence ID" value="CAG40223.1"/>
    <property type="molecule type" value="Genomic_DNA"/>
</dbReference>
<dbReference type="RefSeq" id="WP_001020807.1">
    <property type="nucleotide sequence ID" value="NC_002952.2"/>
</dbReference>
<dbReference type="SMR" id="Q6GHJ0"/>
<dbReference type="KEGG" id="sar:SAR1221"/>
<dbReference type="HOGENOM" id="CLU_037430_0_2_9"/>
<dbReference type="UniPathway" id="UPA00223">
    <property type="reaction ID" value="UER00999"/>
</dbReference>
<dbReference type="Proteomes" id="UP000000596">
    <property type="component" value="Chromosome"/>
</dbReference>
<dbReference type="GO" id="GO:0005829">
    <property type="term" value="C:cytosol"/>
    <property type="evidence" value="ECO:0007669"/>
    <property type="project" value="TreeGrafter"/>
</dbReference>
<dbReference type="GO" id="GO:0042709">
    <property type="term" value="C:succinate-CoA ligase complex"/>
    <property type="evidence" value="ECO:0007669"/>
    <property type="project" value="TreeGrafter"/>
</dbReference>
<dbReference type="GO" id="GO:0005524">
    <property type="term" value="F:ATP binding"/>
    <property type="evidence" value="ECO:0007669"/>
    <property type="project" value="UniProtKB-UniRule"/>
</dbReference>
<dbReference type="GO" id="GO:0000287">
    <property type="term" value="F:magnesium ion binding"/>
    <property type="evidence" value="ECO:0007669"/>
    <property type="project" value="UniProtKB-UniRule"/>
</dbReference>
<dbReference type="GO" id="GO:0004775">
    <property type="term" value="F:succinate-CoA ligase (ADP-forming) activity"/>
    <property type="evidence" value="ECO:0007669"/>
    <property type="project" value="UniProtKB-UniRule"/>
</dbReference>
<dbReference type="GO" id="GO:0004776">
    <property type="term" value="F:succinate-CoA ligase (GDP-forming) activity"/>
    <property type="evidence" value="ECO:0007669"/>
    <property type="project" value="RHEA"/>
</dbReference>
<dbReference type="GO" id="GO:0006104">
    <property type="term" value="P:succinyl-CoA metabolic process"/>
    <property type="evidence" value="ECO:0007669"/>
    <property type="project" value="TreeGrafter"/>
</dbReference>
<dbReference type="GO" id="GO:0006099">
    <property type="term" value="P:tricarboxylic acid cycle"/>
    <property type="evidence" value="ECO:0007669"/>
    <property type="project" value="UniProtKB-UniRule"/>
</dbReference>
<dbReference type="FunFam" id="3.30.1490.20:FF:000002">
    <property type="entry name" value="Succinate--CoA ligase [ADP-forming] subunit beta"/>
    <property type="match status" value="1"/>
</dbReference>
<dbReference type="FunFam" id="3.30.470.20:FF:000002">
    <property type="entry name" value="Succinate--CoA ligase [ADP-forming] subunit beta"/>
    <property type="match status" value="1"/>
</dbReference>
<dbReference type="FunFam" id="3.40.50.261:FF:000001">
    <property type="entry name" value="Succinate--CoA ligase [ADP-forming] subunit beta"/>
    <property type="match status" value="1"/>
</dbReference>
<dbReference type="Gene3D" id="3.30.1490.20">
    <property type="entry name" value="ATP-grasp fold, A domain"/>
    <property type="match status" value="1"/>
</dbReference>
<dbReference type="Gene3D" id="3.30.470.20">
    <property type="entry name" value="ATP-grasp fold, B domain"/>
    <property type="match status" value="1"/>
</dbReference>
<dbReference type="Gene3D" id="3.40.50.261">
    <property type="entry name" value="Succinyl-CoA synthetase domains"/>
    <property type="match status" value="1"/>
</dbReference>
<dbReference type="HAMAP" id="MF_00558">
    <property type="entry name" value="Succ_CoA_beta"/>
    <property type="match status" value="1"/>
</dbReference>
<dbReference type="InterPro" id="IPR011761">
    <property type="entry name" value="ATP-grasp"/>
</dbReference>
<dbReference type="InterPro" id="IPR013650">
    <property type="entry name" value="ATP-grasp_succ-CoA_synth-type"/>
</dbReference>
<dbReference type="InterPro" id="IPR013815">
    <property type="entry name" value="ATP_grasp_subdomain_1"/>
</dbReference>
<dbReference type="InterPro" id="IPR017866">
    <property type="entry name" value="Succ-CoA_synthase_bsu_CS"/>
</dbReference>
<dbReference type="InterPro" id="IPR005811">
    <property type="entry name" value="SUCC_ACL_C"/>
</dbReference>
<dbReference type="InterPro" id="IPR005809">
    <property type="entry name" value="Succ_CoA_ligase-like_bsu"/>
</dbReference>
<dbReference type="InterPro" id="IPR016102">
    <property type="entry name" value="Succinyl-CoA_synth-like"/>
</dbReference>
<dbReference type="NCBIfam" id="NF001913">
    <property type="entry name" value="PRK00696.1"/>
    <property type="match status" value="1"/>
</dbReference>
<dbReference type="NCBIfam" id="TIGR01016">
    <property type="entry name" value="sucCoAbeta"/>
    <property type="match status" value="1"/>
</dbReference>
<dbReference type="PANTHER" id="PTHR11815:SF10">
    <property type="entry name" value="SUCCINATE--COA LIGASE [GDP-FORMING] SUBUNIT BETA, MITOCHONDRIAL"/>
    <property type="match status" value="1"/>
</dbReference>
<dbReference type="PANTHER" id="PTHR11815">
    <property type="entry name" value="SUCCINYL-COA SYNTHETASE BETA CHAIN"/>
    <property type="match status" value="1"/>
</dbReference>
<dbReference type="Pfam" id="PF08442">
    <property type="entry name" value="ATP-grasp_2"/>
    <property type="match status" value="1"/>
</dbReference>
<dbReference type="Pfam" id="PF00549">
    <property type="entry name" value="Ligase_CoA"/>
    <property type="match status" value="1"/>
</dbReference>
<dbReference type="PIRSF" id="PIRSF001554">
    <property type="entry name" value="SucCS_beta"/>
    <property type="match status" value="1"/>
</dbReference>
<dbReference type="SUPFAM" id="SSF56059">
    <property type="entry name" value="Glutathione synthetase ATP-binding domain-like"/>
    <property type="match status" value="1"/>
</dbReference>
<dbReference type="SUPFAM" id="SSF52210">
    <property type="entry name" value="Succinyl-CoA synthetase domains"/>
    <property type="match status" value="1"/>
</dbReference>
<dbReference type="PROSITE" id="PS50975">
    <property type="entry name" value="ATP_GRASP"/>
    <property type="match status" value="1"/>
</dbReference>
<dbReference type="PROSITE" id="PS01217">
    <property type="entry name" value="SUCCINYL_COA_LIG_3"/>
    <property type="match status" value="1"/>
</dbReference>
<name>SUCC_STAAR</name>
<keyword id="KW-0067">ATP-binding</keyword>
<keyword id="KW-0436">Ligase</keyword>
<keyword id="KW-0460">Magnesium</keyword>
<keyword id="KW-0479">Metal-binding</keyword>
<keyword id="KW-0547">Nucleotide-binding</keyword>
<keyword id="KW-0816">Tricarboxylic acid cycle</keyword>